<gene>
    <name evidence="2" type="primary">OBAP1A</name>
    <name type="ORF">gpm458</name>
    <name evidence="4" type="ORF">ZEAMMB73_819337</name>
</gene>
<proteinExistence type="evidence at transcript level"/>
<protein>
    <recommendedName>
        <fullName evidence="2">Oil body-associated protein 1A</fullName>
    </recommendedName>
</protein>
<feature type="chain" id="PRO_0000436091" description="Oil body-associated protein 1A">
    <location>
        <begin position="1"/>
        <end position="238"/>
    </location>
</feature>
<feature type="sequence conflict" description="In Ref. 2; ACG48482." evidence="3" ref="2">
    <original>P</original>
    <variation>S</variation>
    <location>
        <position position="201"/>
    </location>
</feature>
<reference key="1">
    <citation type="journal article" date="2009" name="Science">
        <title>The B73 maize genome: complexity, diversity, and dynamics.</title>
        <authorList>
            <person name="Schnable P.S."/>
            <person name="Ware D."/>
            <person name="Fulton R.S."/>
            <person name="Stein J.C."/>
            <person name="Wei F."/>
            <person name="Pasternak S."/>
            <person name="Liang C."/>
            <person name="Zhang J."/>
            <person name="Fulton L."/>
            <person name="Graves T.A."/>
            <person name="Minx P."/>
            <person name="Reily A.D."/>
            <person name="Courtney L."/>
            <person name="Kruchowski S.S."/>
            <person name="Tomlinson C."/>
            <person name="Strong C."/>
            <person name="Delehaunty K."/>
            <person name="Fronick C."/>
            <person name="Courtney B."/>
            <person name="Rock S.M."/>
            <person name="Belter E."/>
            <person name="Du F."/>
            <person name="Kim K."/>
            <person name="Abbott R.M."/>
            <person name="Cotton M."/>
            <person name="Levy A."/>
            <person name="Marchetto P."/>
            <person name="Ochoa K."/>
            <person name="Jackson S.M."/>
            <person name="Gillam B."/>
            <person name="Chen W."/>
            <person name="Yan L."/>
            <person name="Higginbotham J."/>
            <person name="Cardenas M."/>
            <person name="Waligorski J."/>
            <person name="Applebaum E."/>
            <person name="Phelps L."/>
            <person name="Falcone J."/>
            <person name="Kanchi K."/>
            <person name="Thane T."/>
            <person name="Scimone A."/>
            <person name="Thane N."/>
            <person name="Henke J."/>
            <person name="Wang T."/>
            <person name="Ruppert J."/>
            <person name="Shah N."/>
            <person name="Rotter K."/>
            <person name="Hodges J."/>
            <person name="Ingenthron E."/>
            <person name="Cordes M."/>
            <person name="Kohlberg S."/>
            <person name="Sgro J."/>
            <person name="Delgado B."/>
            <person name="Mead K."/>
            <person name="Chinwalla A."/>
            <person name="Leonard S."/>
            <person name="Crouse K."/>
            <person name="Collura K."/>
            <person name="Kudrna D."/>
            <person name="Currie J."/>
            <person name="He R."/>
            <person name="Angelova A."/>
            <person name="Rajasekar S."/>
            <person name="Mueller T."/>
            <person name="Lomeli R."/>
            <person name="Scara G."/>
            <person name="Ko A."/>
            <person name="Delaney K."/>
            <person name="Wissotski M."/>
            <person name="Lopez G."/>
            <person name="Campos D."/>
            <person name="Braidotti M."/>
            <person name="Ashley E."/>
            <person name="Golser W."/>
            <person name="Kim H."/>
            <person name="Lee S."/>
            <person name="Lin J."/>
            <person name="Dujmic Z."/>
            <person name="Kim W."/>
            <person name="Talag J."/>
            <person name="Zuccolo A."/>
            <person name="Fan C."/>
            <person name="Sebastian A."/>
            <person name="Kramer M."/>
            <person name="Spiegel L."/>
            <person name="Nascimento L."/>
            <person name="Zutavern T."/>
            <person name="Miller B."/>
            <person name="Ambroise C."/>
            <person name="Muller S."/>
            <person name="Spooner W."/>
            <person name="Narechania A."/>
            <person name="Ren L."/>
            <person name="Wei S."/>
            <person name="Kumari S."/>
            <person name="Faga B."/>
            <person name="Levy M.J."/>
            <person name="McMahan L."/>
            <person name="Van Buren P."/>
            <person name="Vaughn M.W."/>
            <person name="Ying K."/>
            <person name="Yeh C.-T."/>
            <person name="Emrich S.J."/>
            <person name="Jia Y."/>
            <person name="Kalyanaraman A."/>
            <person name="Hsia A.-P."/>
            <person name="Barbazuk W.B."/>
            <person name="Baucom R.S."/>
            <person name="Brutnell T.P."/>
            <person name="Carpita N.C."/>
            <person name="Chaparro C."/>
            <person name="Chia J.-M."/>
            <person name="Deragon J.-M."/>
            <person name="Estill J.C."/>
            <person name="Fu Y."/>
            <person name="Jeddeloh J.A."/>
            <person name="Han Y."/>
            <person name="Lee H."/>
            <person name="Li P."/>
            <person name="Lisch D.R."/>
            <person name="Liu S."/>
            <person name="Liu Z."/>
            <person name="Nagel D.H."/>
            <person name="McCann M.C."/>
            <person name="SanMiguel P."/>
            <person name="Myers A.M."/>
            <person name="Nettleton D."/>
            <person name="Nguyen J."/>
            <person name="Penning B.W."/>
            <person name="Ponnala L."/>
            <person name="Schneider K.L."/>
            <person name="Schwartz D.C."/>
            <person name="Sharma A."/>
            <person name="Soderlund C."/>
            <person name="Springer N.M."/>
            <person name="Sun Q."/>
            <person name="Wang H."/>
            <person name="Waterman M."/>
            <person name="Westerman R."/>
            <person name="Wolfgruber T.K."/>
            <person name="Yang L."/>
            <person name="Yu Y."/>
            <person name="Zhang L."/>
            <person name="Zhou S."/>
            <person name="Zhu Q."/>
            <person name="Bennetzen J.L."/>
            <person name="Dawe R.K."/>
            <person name="Jiang J."/>
            <person name="Jiang N."/>
            <person name="Presting G.G."/>
            <person name="Wessler S.R."/>
            <person name="Aluru S."/>
            <person name="Martienssen R.A."/>
            <person name="Clifton S.W."/>
            <person name="McCombie W.R."/>
            <person name="Wing R.A."/>
            <person name="Wilson R.K."/>
        </authorList>
    </citation>
    <scope>NUCLEOTIDE SEQUENCE [LARGE SCALE GENOMIC DNA]</scope>
    <source>
        <strain>cv. B73</strain>
    </source>
</reference>
<reference key="2">
    <citation type="journal article" date="2009" name="Plant Mol. Biol.">
        <title>Insights into corn genes derived from large-scale cDNA sequencing.</title>
        <authorList>
            <person name="Alexandrov N.N."/>
            <person name="Brover V.V."/>
            <person name="Freidin S."/>
            <person name="Troukhan M.E."/>
            <person name="Tatarinova T.V."/>
            <person name="Zhang H."/>
            <person name="Swaller T.J."/>
            <person name="Lu Y.-P."/>
            <person name="Bouck J."/>
            <person name="Flavell R.B."/>
            <person name="Feldmann K.A."/>
        </authorList>
    </citation>
    <scope>NUCLEOTIDE SEQUENCE [LARGE SCALE MRNA]</scope>
</reference>
<reference key="3">
    <citation type="journal article" date="2009" name="PLoS Genet.">
        <title>Sequencing, mapping, and analysis of 27,455 maize full-length cDNAs.</title>
        <authorList>
            <person name="Soderlund C."/>
            <person name="Descour A."/>
            <person name="Kudrna D."/>
            <person name="Bomhoff M."/>
            <person name="Boyd L."/>
            <person name="Currie J."/>
            <person name="Angelova A."/>
            <person name="Collura K."/>
            <person name="Wissotski M."/>
            <person name="Ashley E."/>
            <person name="Morrow D."/>
            <person name="Fernandes J."/>
            <person name="Walbot V."/>
            <person name="Yu Y."/>
        </authorList>
    </citation>
    <scope>NUCLEOTIDE SEQUENCE [LARGE SCALE MRNA]</scope>
    <source>
        <strain>cv. B73</strain>
    </source>
</reference>
<reference key="4">
    <citation type="journal article" date="2014" name="Plant Physiol.">
        <title>The evolutionary conserved oil body associated protein OBAP1 participates in the regulation of oil body size.</title>
        <authorList>
            <person name="Lopez-Ribera I."/>
            <person name="La Paz J.L."/>
            <person name="Repiso C."/>
            <person name="Garcia N."/>
            <person name="Miquel M."/>
            <person name="Hernandez M.L."/>
            <person name="Martinez-Rivas J.M."/>
            <person name="Vicient C.M."/>
        </authorList>
    </citation>
    <scope>TISSUE SPECIFICITY</scope>
    <scope>DEVELOPMENTAL STAGE</scope>
    <scope>SUBCELLULAR LOCATION</scope>
    <scope>GENE FAMILY</scope>
    <scope>NOMENCLATURE</scope>
</reference>
<comment type="subcellular location">
    <subcellularLocation>
        <location evidence="1">Lipid droplet</location>
    </subcellularLocation>
</comment>
<comment type="tissue specificity">
    <text evidence="1">Expressed in seeds, but not in leaves or roots. Highest expression in scutellum. Detected in embryo axis and endosperm.</text>
</comment>
<comment type="developmental stage">
    <text evidence="1">Expressed in maturing embryos, with a maximum at 35 days after pollination. Decreases rapidly after imbibition.</text>
</comment>
<comment type="similarity">
    <text evidence="3">Belongs to the OBAP family.</text>
</comment>
<evidence type="ECO:0000269" key="1">
    <source>
    </source>
</evidence>
<evidence type="ECO:0000303" key="2">
    <source>
    </source>
</evidence>
<evidence type="ECO:0000305" key="3"/>
<evidence type="ECO:0000312" key="4">
    <source>
        <dbReference type="EMBL" id="AFW63380.1"/>
    </source>
</evidence>
<keyword id="KW-0551">Lipid droplet</keyword>
<keyword id="KW-0449">Lipoprotein</keyword>
<keyword id="KW-1185">Reference proteome</keyword>
<sequence>MASSCQNVEIPGKPTETGTALLETATGTIQGFAPLSQIHQHLCAFHFYADDMGRQVEAHHFCAHLNEDVRQCLIFDGPGAGARLIGVEYIVSETVFLTLPDAEKPLWHTHEFEVKGGVLFMPGVPGVVERRDLEKVCKTYGKTIHFWQVDRGDALPLGLPQIMMVLTREGQLRQDLADCVEKKFGVSFQKERENRAYMSGPEHGIHPLANATGKGLRTEIREVDLPASTTAGAGRVFT</sequence>
<organism>
    <name type="scientific">Zea mays</name>
    <name type="common">Maize</name>
    <dbReference type="NCBI Taxonomy" id="4577"/>
    <lineage>
        <taxon>Eukaryota</taxon>
        <taxon>Viridiplantae</taxon>
        <taxon>Streptophyta</taxon>
        <taxon>Embryophyta</taxon>
        <taxon>Tracheophyta</taxon>
        <taxon>Spermatophyta</taxon>
        <taxon>Magnoliopsida</taxon>
        <taxon>Liliopsida</taxon>
        <taxon>Poales</taxon>
        <taxon>Poaceae</taxon>
        <taxon>PACMAD clade</taxon>
        <taxon>Panicoideae</taxon>
        <taxon>Andropogonodae</taxon>
        <taxon>Andropogoneae</taxon>
        <taxon>Tripsacinae</taxon>
        <taxon>Zea</taxon>
    </lineage>
</organism>
<name>OBP1A_MAIZE</name>
<dbReference type="EMBL" id="CM000780">
    <property type="protein sequence ID" value="AFW63380.1"/>
    <property type="molecule type" value="Genomic_DNA"/>
</dbReference>
<dbReference type="EMBL" id="EU977033">
    <property type="protein sequence ID" value="ACG49151.1"/>
    <property type="molecule type" value="mRNA"/>
</dbReference>
<dbReference type="EMBL" id="EU976364">
    <property type="protein sequence ID" value="ACG48482.1"/>
    <property type="molecule type" value="mRNA"/>
</dbReference>
<dbReference type="EMBL" id="BT036037">
    <property type="protein sequence ID" value="ACF81042.1"/>
    <property type="molecule type" value="mRNA"/>
</dbReference>
<dbReference type="RefSeq" id="NP_001132265.1">
    <property type="nucleotide sequence ID" value="NM_001138793.1"/>
</dbReference>
<dbReference type="FunCoup" id="B4FFZ9">
    <property type="interactions" value="167"/>
</dbReference>
<dbReference type="STRING" id="4577.B4FFZ9"/>
<dbReference type="PaxDb" id="4577-GRMZM2G044627_P01"/>
<dbReference type="EnsemblPlants" id="Zm00001eb187280_T002">
    <property type="protein sequence ID" value="Zm00001eb187280_P002"/>
    <property type="gene ID" value="Zm00001eb187280"/>
</dbReference>
<dbReference type="GeneID" id="100193701"/>
<dbReference type="Gramene" id="Zm00001eb187280_T002">
    <property type="protein sequence ID" value="Zm00001eb187280_P002"/>
    <property type="gene ID" value="Zm00001eb187280"/>
</dbReference>
<dbReference type="KEGG" id="zma:100193701"/>
<dbReference type="eggNOG" id="ENOG502QR3B">
    <property type="taxonomic scope" value="Eukaryota"/>
</dbReference>
<dbReference type="HOGENOM" id="CLU_071931_2_1_1"/>
<dbReference type="InParanoid" id="B4FFZ9"/>
<dbReference type="OMA" id="RHVEAHH"/>
<dbReference type="OrthoDB" id="1901244at2759"/>
<dbReference type="Proteomes" id="UP000007305">
    <property type="component" value="Chromosome 4"/>
</dbReference>
<dbReference type="ExpressionAtlas" id="B4FFZ9">
    <property type="expression patterns" value="baseline and differential"/>
</dbReference>
<dbReference type="GO" id="GO:0005811">
    <property type="term" value="C:lipid droplet"/>
    <property type="evidence" value="ECO:0007669"/>
    <property type="project" value="UniProtKB-SubCell"/>
</dbReference>
<dbReference type="InterPro" id="IPR010686">
    <property type="entry name" value="OBAP-like"/>
</dbReference>
<dbReference type="PANTHER" id="PTHR31360">
    <property type="match status" value="1"/>
</dbReference>
<dbReference type="PANTHER" id="PTHR31360:SF0">
    <property type="entry name" value="OIL BODY-ASSOCIATED PROTEIN 1B"/>
    <property type="match status" value="1"/>
</dbReference>
<dbReference type="Pfam" id="PF06884">
    <property type="entry name" value="DUF1264"/>
    <property type="match status" value="1"/>
</dbReference>
<accession>B4FFZ9</accession>
<accession>B6UGJ9</accession>